<comment type="subcellular location">
    <subcellularLocation>
        <location evidence="1">Mitochondrion intermembrane space</location>
    </subcellularLocation>
    <text evidence="1">Imported into the mitochondria via the mitochondrial disulfide relay system.</text>
</comment>
<comment type="domain">
    <text evidence="1">The twin Cx9C motifs are involved in the recognition by the mitochondrial disulfide relay system.</text>
</comment>
<comment type="similarity">
    <text evidence="3">Belongs to the CMC4 family.</text>
</comment>
<gene>
    <name type="primary">CMC4</name>
    <name type="ORF">CAWG_04296</name>
</gene>
<evidence type="ECO:0000250" key="1"/>
<evidence type="ECO:0000255" key="2">
    <source>
        <dbReference type="PROSITE-ProRule" id="PRU01150"/>
    </source>
</evidence>
<evidence type="ECO:0000305" key="3"/>
<name>CMC4_CANAW</name>
<dbReference type="EMBL" id="CH672350">
    <property type="protein sequence ID" value="EEQ45955.1"/>
    <property type="molecule type" value="Genomic_DNA"/>
</dbReference>
<dbReference type="SMR" id="C4YIM0"/>
<dbReference type="PaxDb" id="5476-C4YIM0"/>
<dbReference type="VEuPathDB" id="FungiDB:CAWG_04296"/>
<dbReference type="HOGENOM" id="CLU_177210_0_1_1"/>
<dbReference type="OMA" id="YQEEKCQ"/>
<dbReference type="OrthoDB" id="6453at766764"/>
<dbReference type="Proteomes" id="UP000001429">
    <property type="component" value="Chromosome 2, Supercontig 1.5"/>
</dbReference>
<dbReference type="GO" id="GO:0005758">
    <property type="term" value="C:mitochondrial intermembrane space"/>
    <property type="evidence" value="ECO:0007669"/>
    <property type="project" value="UniProtKB-SubCell"/>
</dbReference>
<dbReference type="FunFam" id="1.10.287.1130:FF:000008">
    <property type="entry name" value="Cx9C motif-containing protein 4, mitochondrial"/>
    <property type="match status" value="1"/>
</dbReference>
<dbReference type="Gene3D" id="1.10.287.1130">
    <property type="entry name" value="CytochromE C oxidase copper chaperone"/>
    <property type="match status" value="1"/>
</dbReference>
<dbReference type="InterPro" id="IPR027179">
    <property type="entry name" value="CMC4"/>
</dbReference>
<dbReference type="InterPro" id="IPR009069">
    <property type="entry name" value="Cys_alpha_HP_mot_SF"/>
</dbReference>
<dbReference type="PANTHER" id="PTHR15590">
    <property type="entry name" value="CX9C MOTIF-CONTAINING PROTEIN 4"/>
    <property type="match status" value="1"/>
</dbReference>
<dbReference type="PANTHER" id="PTHR15590:SF0">
    <property type="entry name" value="CX9C MOTIF-CONTAINING PROTEIN 4"/>
    <property type="match status" value="1"/>
</dbReference>
<dbReference type="Pfam" id="PF08991">
    <property type="entry name" value="CMC4"/>
    <property type="match status" value="1"/>
</dbReference>
<dbReference type="SUPFAM" id="SSF47072">
    <property type="entry name" value="Cysteine alpha-hairpin motif"/>
    <property type="match status" value="1"/>
</dbReference>
<dbReference type="PROSITE" id="PS51808">
    <property type="entry name" value="CHCH"/>
    <property type="match status" value="1"/>
</dbReference>
<accession>C4YIM0</accession>
<keyword id="KW-1015">Disulfide bond</keyword>
<keyword id="KW-0496">Mitochondrion</keyword>
<keyword id="KW-0677">Repeat</keyword>
<protein>
    <recommendedName>
        <fullName>Cx9C motif-containing protein 4, mitochondrial</fullName>
    </recommendedName>
</protein>
<organism>
    <name type="scientific">Candida albicans (strain WO-1)</name>
    <name type="common">Yeast</name>
    <dbReference type="NCBI Taxonomy" id="294748"/>
    <lineage>
        <taxon>Eukaryota</taxon>
        <taxon>Fungi</taxon>
        <taxon>Dikarya</taxon>
        <taxon>Ascomycota</taxon>
        <taxon>Saccharomycotina</taxon>
        <taxon>Pichiomycetes</taxon>
        <taxon>Debaryomycetaceae</taxon>
        <taxon>Candida/Lodderomyces clade</taxon>
        <taxon>Candida</taxon>
    </lineage>
</organism>
<feature type="chain" id="PRO_0000408571" description="Cx9C motif-containing protein 4, mitochondrial">
    <location>
        <begin position="1"/>
        <end position="84"/>
    </location>
</feature>
<feature type="domain" description="CHCH" evidence="2">
    <location>
        <begin position="5"/>
        <end position="47"/>
    </location>
</feature>
<feature type="short sequence motif" description="Cx9C motif 1" evidence="2">
    <location>
        <begin position="8"/>
        <end position="18"/>
    </location>
</feature>
<feature type="short sequence motif" description="Cx9C motif 2" evidence="2">
    <location>
        <begin position="29"/>
        <end position="39"/>
    </location>
</feature>
<feature type="disulfide bond" evidence="2">
    <location>
        <begin position="8"/>
        <end position="39"/>
    </location>
</feature>
<feature type="disulfide bond" evidence="2">
    <location>
        <begin position="18"/>
        <end position="29"/>
    </location>
</feature>
<sequence length="84" mass="9599">MSEVNETCKPQACAIQNCLEKNGYNESRCTKCIDDLYKCCKEFYERQGPDASSVCCPKFKLLQLKLKQRSLGEIDAKVLETRRG</sequence>
<reference key="1">
    <citation type="journal article" date="2009" name="Nature">
        <title>Evolution of pathogenicity and sexual reproduction in eight Candida genomes.</title>
        <authorList>
            <person name="Butler G."/>
            <person name="Rasmussen M.D."/>
            <person name="Lin M.F."/>
            <person name="Santos M.A.S."/>
            <person name="Sakthikumar S."/>
            <person name="Munro C.A."/>
            <person name="Rheinbay E."/>
            <person name="Grabherr M."/>
            <person name="Forche A."/>
            <person name="Reedy J.L."/>
            <person name="Agrafioti I."/>
            <person name="Arnaud M.B."/>
            <person name="Bates S."/>
            <person name="Brown A.J.P."/>
            <person name="Brunke S."/>
            <person name="Costanzo M.C."/>
            <person name="Fitzpatrick D.A."/>
            <person name="de Groot P.W.J."/>
            <person name="Harris D."/>
            <person name="Hoyer L.L."/>
            <person name="Hube B."/>
            <person name="Klis F.M."/>
            <person name="Kodira C."/>
            <person name="Lennard N."/>
            <person name="Logue M.E."/>
            <person name="Martin R."/>
            <person name="Neiman A.M."/>
            <person name="Nikolaou E."/>
            <person name="Quail M.A."/>
            <person name="Quinn J."/>
            <person name="Santos M.C."/>
            <person name="Schmitzberger F.F."/>
            <person name="Sherlock G."/>
            <person name="Shah P."/>
            <person name="Silverstein K.A.T."/>
            <person name="Skrzypek M.S."/>
            <person name="Soll D."/>
            <person name="Staggs R."/>
            <person name="Stansfield I."/>
            <person name="Stumpf M.P.H."/>
            <person name="Sudbery P.E."/>
            <person name="Srikantha T."/>
            <person name="Zeng Q."/>
            <person name="Berman J."/>
            <person name="Berriman M."/>
            <person name="Heitman J."/>
            <person name="Gow N.A.R."/>
            <person name="Lorenz M.C."/>
            <person name="Birren B.W."/>
            <person name="Kellis M."/>
            <person name="Cuomo C.A."/>
        </authorList>
    </citation>
    <scope>NUCLEOTIDE SEQUENCE [LARGE SCALE GENOMIC DNA]</scope>
    <source>
        <strain>WO-1</strain>
    </source>
</reference>
<proteinExistence type="inferred from homology"/>